<protein>
    <recommendedName>
        <fullName>Intraflagellar transport protein 70A</fullName>
    </recommendedName>
    <alternativeName>
        <fullName>Tetratricopeptide repeat protein 30A</fullName>
        <shortName>TPR repeat protein 30A</shortName>
    </alternativeName>
</protein>
<feature type="chain" id="PRO_0000333207" description="Intraflagellar transport protein 70A">
    <location>
        <begin position="1"/>
        <end position="651"/>
    </location>
</feature>
<feature type="repeat" description="TPR 1">
    <location>
        <begin position="8"/>
        <end position="41"/>
    </location>
</feature>
<feature type="repeat" description="TPR 2">
    <location>
        <begin position="42"/>
        <end position="75"/>
    </location>
</feature>
<feature type="repeat" description="TPR 3">
    <location>
        <begin position="140"/>
        <end position="173"/>
    </location>
</feature>
<feature type="repeat" description="TPR 4">
    <location>
        <begin position="175"/>
        <end position="207"/>
    </location>
</feature>
<feature type="repeat" description="TPR 5">
    <location>
        <begin position="372"/>
        <end position="405"/>
    </location>
</feature>
<feature type="repeat" description="TPR 6">
    <location>
        <begin position="410"/>
        <end position="443"/>
    </location>
</feature>
<feature type="repeat" description="TPR 7">
    <location>
        <begin position="445"/>
        <end position="478"/>
    </location>
</feature>
<feature type="repeat" description="TPR 8">
    <location>
        <begin position="530"/>
        <end position="563"/>
    </location>
</feature>
<feature type="coiled-coil region" evidence="2">
    <location>
        <begin position="494"/>
        <end position="521"/>
    </location>
</feature>
<dbReference type="EMBL" id="BC072174">
    <property type="protein sequence ID" value="AAH72174.1"/>
    <property type="molecule type" value="mRNA"/>
</dbReference>
<dbReference type="RefSeq" id="NP_001085158.1">
    <property type="nucleotide sequence ID" value="NM_001091689.1"/>
</dbReference>
<dbReference type="SMR" id="Q6INU8"/>
<dbReference type="DNASU" id="432240"/>
<dbReference type="GeneID" id="432240"/>
<dbReference type="KEGG" id="xla:432240"/>
<dbReference type="AGR" id="Xenbase:XB-GENE-1221165"/>
<dbReference type="CTD" id="432240"/>
<dbReference type="Xenbase" id="XB-GENE-1221165">
    <property type="gene designation" value="ift70a.S"/>
</dbReference>
<dbReference type="OMA" id="CCKHELY"/>
<dbReference type="OrthoDB" id="10249577at2759"/>
<dbReference type="Proteomes" id="UP000186698">
    <property type="component" value="Chromosome 6S"/>
</dbReference>
<dbReference type="Bgee" id="432240">
    <property type="expression patterns" value="Expressed in egg cell and 19 other cell types or tissues"/>
</dbReference>
<dbReference type="GO" id="GO:0005879">
    <property type="term" value="C:axonemal microtubule"/>
    <property type="evidence" value="ECO:0000250"/>
    <property type="project" value="UniProtKB"/>
</dbReference>
<dbReference type="GO" id="GO:0005929">
    <property type="term" value="C:cilium"/>
    <property type="evidence" value="ECO:0000250"/>
    <property type="project" value="UniProtKB"/>
</dbReference>
<dbReference type="GO" id="GO:0030992">
    <property type="term" value="C:intraciliary transport particle B"/>
    <property type="evidence" value="ECO:0000318"/>
    <property type="project" value="GO_Central"/>
</dbReference>
<dbReference type="GO" id="GO:0120170">
    <property type="term" value="F:intraciliary transport particle B binding"/>
    <property type="evidence" value="ECO:0000318"/>
    <property type="project" value="GO_Central"/>
</dbReference>
<dbReference type="GO" id="GO:0042073">
    <property type="term" value="P:intraciliary transport"/>
    <property type="evidence" value="ECO:0000250"/>
    <property type="project" value="UniProtKB"/>
</dbReference>
<dbReference type="GO" id="GO:0018095">
    <property type="term" value="P:protein polyglutamylation"/>
    <property type="evidence" value="ECO:0000250"/>
    <property type="project" value="UniProtKB"/>
</dbReference>
<dbReference type="FunFam" id="1.25.40.10:FF:000226">
    <property type="entry name" value="Tetratricopeptide repeat protein 30A"/>
    <property type="match status" value="1"/>
</dbReference>
<dbReference type="FunFam" id="1.25.40.10:FF:000211">
    <property type="entry name" value="tetratricopeptide repeat protein 30B"/>
    <property type="match status" value="1"/>
</dbReference>
<dbReference type="Gene3D" id="1.25.40.10">
    <property type="entry name" value="Tetratricopeptide repeat domain"/>
    <property type="match status" value="3"/>
</dbReference>
<dbReference type="InterPro" id="IPR011990">
    <property type="entry name" value="TPR-like_helical_dom_sf"/>
</dbReference>
<dbReference type="InterPro" id="IPR019734">
    <property type="entry name" value="TPR_rpt"/>
</dbReference>
<dbReference type="InterPro" id="IPR039941">
    <property type="entry name" value="TT30"/>
</dbReference>
<dbReference type="PANTHER" id="PTHR20931">
    <property type="entry name" value="TETRATRICOPEPTIDE REPEAT PROTEIN 30"/>
    <property type="match status" value="1"/>
</dbReference>
<dbReference type="PANTHER" id="PTHR20931:SF0">
    <property type="entry name" value="TETRATRICOPEPTIDE REPEAT PROTEIN 30"/>
    <property type="match status" value="1"/>
</dbReference>
<dbReference type="Pfam" id="PF13174">
    <property type="entry name" value="TPR_6"/>
    <property type="match status" value="1"/>
</dbReference>
<dbReference type="SMART" id="SM00028">
    <property type="entry name" value="TPR"/>
    <property type="match status" value="4"/>
</dbReference>
<dbReference type="SUPFAM" id="SSF48452">
    <property type="entry name" value="TPR-like"/>
    <property type="match status" value="3"/>
</dbReference>
<dbReference type="PROSITE" id="PS50005">
    <property type="entry name" value="TPR"/>
    <property type="match status" value="3"/>
</dbReference>
<dbReference type="PROSITE" id="PS50293">
    <property type="entry name" value="TPR_REGION"/>
    <property type="match status" value="3"/>
</dbReference>
<name>IT70A_XENLA</name>
<proteinExistence type="evidence at transcript level"/>
<sequence>MAVRQIKDGEYTATIYRLIKEARYGEAIQVLSNELQKQYRSRAGLSLLGYCYYQIQDFVNAADCYEQLIQISPEVEEYKLYYAQSLYKACMYPEAMKATFALDNAAYQSKMLKLQASVKYGEEDISGAKSLVEQMPSEDPESEINMGCLLYKEGHYEEACKKFITAMQVMGYKQDLSFNIALCYYSMKQYAPALKHIADIIERGIREHPELGVGMTTEGIEVRSVGNTLVLHETALIEAFNLKAAIEYQLKNYEAAQEALTDMPPRSEEELDPVTLHNQALMNMDTKPTEGFEKLQFLLQQNPFPPETFGNLLLLYSKYEYFDLAADVLAENAHLTYKFLTPYLYDFLDAMITCQTAPEEAFLKLDELAGMLTEQMRKLTKQVQEARHNRDDEAVKKAVNEYDETLEKYIPVLMAQAKIYWNMENYQMVEKIFRKSVEFCNEHDIWKLNVAHVLFMQDNKYKEAIGFYEPIVKKHYDNILNVSAAVLANLCVSYIMTSQNEEAEELMRKIEKEEEQIAYENPDKKIYHLCIVNLVIGTLYCAKGNYEFGISRVIKSLEPYNKKLGTDTWYHAKRCFLSLLENMSKHMIMLRDDVIVECIQFLEHCEIYGRNILAVIEQPLEEERMHIGKNTVTYESRQLKALLYEITSWNL</sequence>
<accession>Q6INU8</accession>
<gene>
    <name type="primary">ift70a</name>
    <name type="synonym">ttc30</name>
    <name type="synonym">ttc30a</name>
</gene>
<reference key="1">
    <citation type="submission" date="2004-06" db="EMBL/GenBank/DDBJ databases">
        <authorList>
            <consortium name="NIH - Xenopus Gene Collection (XGC) project"/>
        </authorList>
    </citation>
    <scope>NUCLEOTIDE SEQUENCE [LARGE SCALE MRNA]</scope>
    <source>
        <tissue>Ovary</tissue>
    </source>
</reference>
<evidence type="ECO:0000250" key="1"/>
<evidence type="ECO:0000255" key="2"/>
<evidence type="ECO:0000305" key="3"/>
<organism>
    <name type="scientific">Xenopus laevis</name>
    <name type="common">African clawed frog</name>
    <dbReference type="NCBI Taxonomy" id="8355"/>
    <lineage>
        <taxon>Eukaryota</taxon>
        <taxon>Metazoa</taxon>
        <taxon>Chordata</taxon>
        <taxon>Craniata</taxon>
        <taxon>Vertebrata</taxon>
        <taxon>Euteleostomi</taxon>
        <taxon>Amphibia</taxon>
        <taxon>Batrachia</taxon>
        <taxon>Anura</taxon>
        <taxon>Pipoidea</taxon>
        <taxon>Pipidae</taxon>
        <taxon>Xenopodinae</taxon>
        <taxon>Xenopus</taxon>
        <taxon>Xenopus</taxon>
    </lineage>
</organism>
<keyword id="KW-0966">Cell projection</keyword>
<keyword id="KW-0969">Cilium</keyword>
<keyword id="KW-0970">Cilium biogenesis/degradation</keyword>
<keyword id="KW-0175">Coiled coil</keyword>
<keyword id="KW-1185">Reference proteome</keyword>
<keyword id="KW-0677">Repeat</keyword>
<keyword id="KW-0802">TPR repeat</keyword>
<comment type="function">
    <text evidence="1">Required for polyglutamylation of axonemal tubulin. Plays a role in anterograde intraflagellar transport (IFT), the process by which cilia precursors are transported from the base of the cilium to the site of their incorporation at the tip.</text>
</comment>
<comment type="subcellular location">
    <subcellularLocation>
        <location evidence="1">Cell projection</location>
        <location evidence="1">Cilium</location>
    </subcellularLocation>
</comment>
<comment type="similarity">
    <text evidence="3">Belongs to the TTC30/dfy-1/fleer family.</text>
</comment>